<organism>
    <name type="scientific">Haliotis asinina</name>
    <name type="common">Donkey's ear abalone</name>
    <name type="synonym">Ass's ear abalone</name>
    <dbReference type="NCBI Taxonomy" id="109174"/>
    <lineage>
        <taxon>Eukaryota</taxon>
        <taxon>Metazoa</taxon>
        <taxon>Spiralia</taxon>
        <taxon>Lophotrochozoa</taxon>
        <taxon>Mollusca</taxon>
        <taxon>Gastropoda</taxon>
        <taxon>Vetigastropoda</taxon>
        <taxon>Lepetellida</taxon>
        <taxon>Haliotoidea</taxon>
        <taxon>Haliotidae</taxon>
        <taxon>Haliotis</taxon>
    </lineage>
</organism>
<protein>
    <recommendedName>
        <fullName>Uncharacterized protein 2</fullName>
    </recommendedName>
</protein>
<keyword id="KW-0903">Direct protein sequencing</keyword>
<keyword id="KW-0964">Secreted</keyword>
<comment type="subcellular location">
    <subcellularLocation>
        <location evidence="3">Secreted</location>
    </subcellularLocation>
</comment>
<comment type="tissue specificity">
    <text evidence="3">Component of the acid-soluble and acid-insoluble organic matrix of calcified shell layers (at protein level).</text>
</comment>
<proteinExistence type="evidence at protein level"/>
<feature type="chain" id="PRO_0000399448" description="Uncharacterized protein 2">
    <location>
        <begin position="1" status="less than"/>
        <end position="179"/>
    </location>
</feature>
<feature type="region of interest" description="Disordered" evidence="1">
    <location>
        <begin position="1"/>
        <end position="41"/>
    </location>
</feature>
<feature type="region of interest" description="Disordered" evidence="1">
    <location>
        <begin position="60"/>
        <end position="82"/>
    </location>
</feature>
<feature type="compositionally biased region" description="Polar residues" evidence="1">
    <location>
        <begin position="1"/>
        <end position="37"/>
    </location>
</feature>
<feature type="compositionally biased region" description="Polar residues" evidence="1">
    <location>
        <begin position="60"/>
        <end position="70"/>
    </location>
</feature>
<feature type="non-terminal residue" evidence="4">
    <location>
        <position position="1"/>
    </location>
</feature>
<sequence length="179" mass="19571">PLGAATSNIPPQYARSTLQPTGLTSRAQSYPTNTNPGPSAKGNLVLPLNWQLLNSPASQIPTQSTTTFRSNPPLPPVVPGRRNTSPFFFPKPTRPLSFRQILDFLGRIRATKELDCKTVSEALSLNLPKFYYPLSCDDKCPPPSVCRHVGLVGFCCPPHVTDQLIWMVGLAERFKVLGG</sequence>
<accession>P86735</accession>
<reference evidence="4" key="1">
    <citation type="journal article" date="2010" name="Mol. Biol. Evol.">
        <title>Parallel evolution of nacre building gene sets in molluscs.</title>
        <authorList>
            <person name="Jackson D.J."/>
            <person name="McDougall C."/>
            <person name="Woodcroft B."/>
            <person name="Moase P."/>
            <person name="Rose R.A."/>
            <person name="Kube M."/>
            <person name="Reinhardt R."/>
            <person name="Rokhsar D.S."/>
            <person name="Montagnani C."/>
            <person name="Joubert C."/>
            <person name="Piquemal D."/>
            <person name="Degnan B.M."/>
        </authorList>
    </citation>
    <scope>NUCLEOTIDE SEQUENCE [MRNA]</scope>
    <scope>IDENTIFICATION</scope>
    <source>
        <tissue evidence="2">Mantle</tissue>
    </source>
</reference>
<reference evidence="4" key="2">
    <citation type="journal article" date="2010" name="Proteome Sci.">
        <title>Proteomic analysis of the organic matrix of the abalone Haliotis asinina calcified shell.</title>
        <authorList>
            <person name="Marie B."/>
            <person name="Marie A."/>
            <person name="Jackson D.J."/>
            <person name="Dubost L."/>
            <person name="Degnan B.M."/>
            <person name="Milet C."/>
            <person name="Marin F."/>
        </authorList>
    </citation>
    <scope>PROTEIN SEQUENCE OF 16-26; 42-81; 100-107 AND 118-139</scope>
    <scope>SUBCELLULAR LOCATION</scope>
    <scope>TISSUE SPECIFICITY</scope>
    <source>
        <tissue evidence="3">Shell</tissue>
    </source>
</reference>
<evidence type="ECO:0000256" key="1">
    <source>
        <dbReference type="SAM" id="MobiDB-lite"/>
    </source>
</evidence>
<evidence type="ECO:0000269" key="2">
    <source>
    </source>
</evidence>
<evidence type="ECO:0000269" key="3">
    <source>
    </source>
</evidence>
<evidence type="ECO:0000305" key="4"/>
<dbReference type="EMBL" id="GT272916">
    <property type="status" value="NOT_ANNOTATED_CDS"/>
    <property type="molecule type" value="mRNA"/>
</dbReference>
<dbReference type="EMBL" id="GT273382">
    <property type="status" value="NOT_ANNOTATED_CDS"/>
    <property type="molecule type" value="mRNA"/>
</dbReference>
<dbReference type="EMBL" id="GT276513">
    <property type="status" value="NOT_ANNOTATED_CDS"/>
    <property type="molecule type" value="mRNA"/>
</dbReference>
<dbReference type="EMBL" id="EZ420893">
    <property type="status" value="NOT_ANNOTATED_CDS"/>
    <property type="molecule type" value="mRNA"/>
</dbReference>
<dbReference type="GO" id="GO:0005576">
    <property type="term" value="C:extracellular region"/>
    <property type="evidence" value="ECO:0000314"/>
    <property type="project" value="UniProtKB"/>
</dbReference>
<name>UP2_HALAI</name>